<feature type="chain" id="PRO_0000106273" description="Cell division cycle protein 27 homolog">
    <location>
        <begin position="1"/>
        <end position="824"/>
    </location>
</feature>
<feature type="repeat" description="TPR 1">
    <location>
        <begin position="6"/>
        <end position="35"/>
    </location>
</feature>
<feature type="repeat" description="TPR 2">
    <location>
        <begin position="38"/>
        <end position="65"/>
    </location>
</feature>
<feature type="repeat" description="TPR 3">
    <location>
        <begin position="67"/>
        <end position="99"/>
    </location>
</feature>
<feature type="repeat" description="TPR 4">
    <location>
        <begin position="115"/>
        <end position="145"/>
    </location>
</feature>
<feature type="repeat" description="TPR 5">
    <location>
        <begin position="465"/>
        <end position="495"/>
    </location>
</feature>
<feature type="repeat" description="TPR 6">
    <location>
        <begin position="499"/>
        <end position="528"/>
    </location>
</feature>
<feature type="repeat" description="TPR 7">
    <location>
        <begin position="533"/>
        <end position="563"/>
    </location>
</feature>
<feature type="repeat" description="TPR 8">
    <location>
        <begin position="567"/>
        <end position="598"/>
    </location>
</feature>
<feature type="repeat" description="TPR 9">
    <location>
        <begin position="601"/>
        <end position="631"/>
    </location>
</feature>
<feature type="repeat" description="TPR 10">
    <location>
        <begin position="635"/>
        <end position="667"/>
    </location>
</feature>
<feature type="repeat" description="TPR 11">
    <location>
        <begin position="670"/>
        <end position="702"/>
    </location>
</feature>
<feature type="repeat" description="TPR 12">
    <location>
        <begin position="704"/>
        <end position="734"/>
    </location>
</feature>
<feature type="repeat" description="TPR 13">
    <location>
        <begin position="737"/>
        <end position="768"/>
    </location>
</feature>
<feature type="region of interest" description="Disordered" evidence="3">
    <location>
        <begin position="287"/>
        <end position="422"/>
    </location>
</feature>
<feature type="region of interest" description="Disordered" evidence="3">
    <location>
        <begin position="781"/>
        <end position="824"/>
    </location>
</feature>
<feature type="compositionally biased region" description="Polar residues" evidence="3">
    <location>
        <begin position="326"/>
        <end position="341"/>
    </location>
</feature>
<feature type="compositionally biased region" description="Low complexity" evidence="3">
    <location>
        <begin position="348"/>
        <end position="361"/>
    </location>
</feature>
<feature type="compositionally biased region" description="Polar residues" evidence="3">
    <location>
        <begin position="362"/>
        <end position="371"/>
    </location>
</feature>
<feature type="compositionally biased region" description="Polar residues" evidence="3">
    <location>
        <begin position="380"/>
        <end position="390"/>
    </location>
</feature>
<feature type="compositionally biased region" description="Basic residues" evidence="3">
    <location>
        <begin position="395"/>
        <end position="413"/>
    </location>
</feature>
<feature type="modified residue" description="Phosphothreonine" evidence="4 16 19">
    <location>
        <position position="205"/>
    </location>
</feature>
<feature type="modified residue" description="Phosphothreonine" evidence="4">
    <location>
        <position position="209"/>
    </location>
</feature>
<feature type="modified residue" description="Phosphothreonine" evidence="4">
    <location>
        <position position="244"/>
    </location>
</feature>
<feature type="modified residue" description="Phosphoserine" evidence="4">
    <location>
        <position position="291"/>
    </location>
</feature>
<feature type="modified residue" description="Phosphothreonine" evidence="4">
    <location>
        <position position="313"/>
    </location>
</feature>
<feature type="modified residue" description="Phosphoserine" evidence="16">
    <location>
        <position position="339"/>
    </location>
</feature>
<feature type="modified residue" description="Phosphothreonine" evidence="17">
    <location>
        <position position="366"/>
    </location>
</feature>
<feature type="modified residue" description="Phosphoserine" evidence="19">
    <location>
        <position position="379"/>
    </location>
</feature>
<feature type="modified residue" description="Phosphoserine" evidence="18">
    <location>
        <position position="386"/>
    </location>
</feature>
<feature type="modified residue" description="Phosphoserine" evidence="4 16 19">
    <location>
        <position position="426"/>
    </location>
</feature>
<feature type="modified residue" description="Phosphothreonine" evidence="4">
    <location>
        <position position="430"/>
    </location>
</feature>
<feature type="modified residue" description="Phosphoserine" evidence="4">
    <location>
        <position position="435"/>
    </location>
</feature>
<feature type="modified residue" description="Phosphoserine" evidence="16">
    <location>
        <position position="438"/>
    </location>
</feature>
<feature type="modified residue" description="Phosphothreonine" evidence="4 16 19">
    <location>
        <position position="446"/>
    </location>
</feature>
<feature type="modified residue" description="Phosphoserine" evidence="8">
    <location>
        <position position="821"/>
    </location>
</feature>
<feature type="splice variant" id="VSP_047225" description="In isoform 2." evidence="12">
    <original>K</original>
    <variation>KTFRVLQ</variation>
    <location>
        <position position="319"/>
    </location>
</feature>
<feature type="sequence variant" id="VAR_035861" description="In a breast cancer sample; somatic mutation." evidence="5">
    <original>G</original>
    <variation>A</variation>
    <location>
        <position position="270"/>
    </location>
</feature>
<feature type="sequence variant" id="VAR_014489" description="In dbSNP:rs202052665.">
    <original>Y</original>
    <variation>H</variation>
    <location>
        <position position="496"/>
    </location>
</feature>
<feature type="mutagenesis site" description="Abolishes binding to MCPH1." evidence="8">
    <original>S</original>
    <variation>A</variation>
    <location>
        <position position="821"/>
    </location>
</feature>
<feature type="sequence conflict" description="In Ref. 6; AAH11656." evidence="13" ref="6">
    <original>K</original>
    <variation>E</variation>
    <location>
        <position position="403"/>
    </location>
</feature>
<feature type="sequence conflict" description="In Ref. 1; AAA60471." evidence="13" ref="1">
    <location>
        <position position="460"/>
    </location>
</feature>
<feature type="sequence conflict" description="In Ref. 1; AAA60471." evidence="13" ref="1">
    <original>A</original>
    <variation>R</variation>
    <location>
        <position position="715"/>
    </location>
</feature>
<feature type="helix" evidence="22">
    <location>
        <begin position="7"/>
        <end position="17"/>
    </location>
</feature>
<feature type="helix" evidence="22">
    <location>
        <begin position="21"/>
        <end position="35"/>
    </location>
</feature>
<feature type="helix" evidence="22">
    <location>
        <begin position="38"/>
        <end position="50"/>
    </location>
</feature>
<feature type="helix" evidence="22">
    <location>
        <begin position="54"/>
        <end position="63"/>
    </location>
</feature>
<feature type="helix" evidence="22">
    <location>
        <begin position="69"/>
        <end position="81"/>
    </location>
</feature>
<feature type="helix" evidence="22">
    <location>
        <begin position="85"/>
        <end position="93"/>
    </location>
</feature>
<feature type="strand" evidence="22">
    <location>
        <begin position="96"/>
        <end position="98"/>
    </location>
</feature>
<feature type="helix" evidence="22">
    <location>
        <begin position="103"/>
        <end position="110"/>
    </location>
</feature>
<feature type="helix" evidence="22">
    <location>
        <begin position="111"/>
        <end position="113"/>
    </location>
</feature>
<feature type="helix" evidence="22">
    <location>
        <begin position="114"/>
        <end position="127"/>
    </location>
</feature>
<feature type="helix" evidence="22">
    <location>
        <begin position="131"/>
        <end position="144"/>
    </location>
</feature>
<feature type="helix" evidence="22">
    <location>
        <begin position="150"/>
        <end position="157"/>
    </location>
</feature>
<feature type="helix" evidence="22">
    <location>
        <begin position="164"/>
        <end position="167"/>
    </location>
</feature>
<feature type="helix" evidence="22">
    <location>
        <begin position="452"/>
        <end position="477"/>
    </location>
</feature>
<feature type="helix" evidence="22">
    <location>
        <begin position="481"/>
        <end position="489"/>
    </location>
</feature>
<feature type="helix" evidence="22">
    <location>
        <begin position="493"/>
        <end position="496"/>
    </location>
</feature>
<feature type="helix" evidence="22">
    <location>
        <begin position="499"/>
        <end position="512"/>
    </location>
</feature>
<feature type="helix" evidence="22">
    <location>
        <begin position="515"/>
        <end position="528"/>
    </location>
</feature>
<feature type="turn" evidence="20">
    <location>
        <begin position="529"/>
        <end position="531"/>
    </location>
</feature>
<feature type="helix" evidence="22">
    <location>
        <begin position="536"/>
        <end position="546"/>
    </location>
</feature>
<feature type="helix" evidence="22">
    <location>
        <begin position="549"/>
        <end position="562"/>
    </location>
</feature>
<feature type="helix" evidence="22">
    <location>
        <begin position="567"/>
        <end position="578"/>
    </location>
</feature>
<feature type="turn" evidence="22">
    <location>
        <begin position="579"/>
        <end position="581"/>
    </location>
</feature>
<feature type="helix" evidence="22">
    <location>
        <begin position="583"/>
        <end position="596"/>
    </location>
</feature>
<feature type="helix" evidence="22">
    <location>
        <begin position="601"/>
        <end position="613"/>
    </location>
</feature>
<feature type="helix" evidence="22">
    <location>
        <begin position="617"/>
        <end position="630"/>
    </location>
</feature>
<feature type="helix" evidence="22">
    <location>
        <begin position="635"/>
        <end position="647"/>
    </location>
</feature>
<feature type="helix" evidence="22">
    <location>
        <begin position="651"/>
        <end position="664"/>
    </location>
</feature>
<feature type="helix" evidence="22">
    <location>
        <begin position="669"/>
        <end position="681"/>
    </location>
</feature>
<feature type="helix" evidence="22">
    <location>
        <begin position="685"/>
        <end position="698"/>
    </location>
</feature>
<feature type="strand" evidence="21">
    <location>
        <begin position="699"/>
        <end position="701"/>
    </location>
</feature>
<feature type="helix" evidence="22">
    <location>
        <begin position="703"/>
        <end position="715"/>
    </location>
</feature>
<feature type="helix" evidence="22">
    <location>
        <begin position="719"/>
        <end position="732"/>
    </location>
</feature>
<feature type="strand" evidence="20">
    <location>
        <begin position="733"/>
        <end position="735"/>
    </location>
</feature>
<feature type="helix" evidence="22">
    <location>
        <begin position="737"/>
        <end position="750"/>
    </location>
</feature>
<feature type="helix" evidence="22">
    <location>
        <begin position="753"/>
        <end position="766"/>
    </location>
</feature>
<feature type="helix" evidence="22">
    <location>
        <begin position="773"/>
        <end position="779"/>
    </location>
</feature>
<gene>
    <name type="primary">CDC27</name>
    <name type="synonym">ANAPC3</name>
    <name type="synonym">D0S1430E</name>
    <name type="synonym">D17S978E</name>
</gene>
<reference key="1">
    <citation type="journal article" date="1993" name="Proc. Natl. Acad. Sci. U.S.A.">
        <title>Linking yeast genetics to mammalian genomes: identification and mapping of the human homolog of CDC27 via the expressed sequence tag (EST) data base.</title>
        <authorList>
            <person name="Tugendreich S."/>
            <person name="Boguski M.S."/>
            <person name="Seldin M."/>
            <person name="Hieter P.A."/>
        </authorList>
    </citation>
    <scope>NUCLEOTIDE SEQUENCE [MRNA] (ISOFORM 1)</scope>
</reference>
<reference key="2">
    <citation type="journal article" date="1995" name="Cell Growth Differ.">
        <title>Identification of a human homologue of yeast nuc2 which interacts with the retinoblastoma protein in a specific manner.</title>
        <authorList>
            <person name="Chen P.L."/>
            <person name="Ueng Y.C."/>
            <person name="Durfee T."/>
            <person name="Chen K.C."/>
            <person name="Yang-Feng T."/>
            <person name="Lee W.H."/>
        </authorList>
    </citation>
    <scope>NUCLEOTIDE SEQUENCE [MRNA] (ISOFORM 1)</scope>
</reference>
<reference key="3">
    <citation type="submission" date="2004-01" db="EMBL/GenBank/DDBJ databases">
        <authorList>
            <consortium name="NIEHS SNPs program"/>
        </authorList>
    </citation>
    <scope>NUCLEOTIDE SEQUENCE [GENOMIC DNA]</scope>
</reference>
<reference key="4">
    <citation type="journal article" date="2006" name="Nature">
        <title>DNA sequence of human chromosome 17 and analysis of rearrangement in the human lineage.</title>
        <authorList>
            <person name="Zody M.C."/>
            <person name="Garber M."/>
            <person name="Adams D.J."/>
            <person name="Sharpe T."/>
            <person name="Harrow J."/>
            <person name="Lupski J.R."/>
            <person name="Nicholson C."/>
            <person name="Searle S.M."/>
            <person name="Wilming L."/>
            <person name="Young S.K."/>
            <person name="Abouelleil A."/>
            <person name="Allen N.R."/>
            <person name="Bi W."/>
            <person name="Bloom T."/>
            <person name="Borowsky M.L."/>
            <person name="Bugalter B.E."/>
            <person name="Butler J."/>
            <person name="Chang J.L."/>
            <person name="Chen C.-K."/>
            <person name="Cook A."/>
            <person name="Corum B."/>
            <person name="Cuomo C.A."/>
            <person name="de Jong P.J."/>
            <person name="DeCaprio D."/>
            <person name="Dewar K."/>
            <person name="FitzGerald M."/>
            <person name="Gilbert J."/>
            <person name="Gibson R."/>
            <person name="Gnerre S."/>
            <person name="Goldstein S."/>
            <person name="Grafham D.V."/>
            <person name="Grocock R."/>
            <person name="Hafez N."/>
            <person name="Hagopian D.S."/>
            <person name="Hart E."/>
            <person name="Norman C.H."/>
            <person name="Humphray S."/>
            <person name="Jaffe D.B."/>
            <person name="Jones M."/>
            <person name="Kamal M."/>
            <person name="Khodiyar V.K."/>
            <person name="LaButti K."/>
            <person name="Laird G."/>
            <person name="Lehoczky J."/>
            <person name="Liu X."/>
            <person name="Lokyitsang T."/>
            <person name="Loveland J."/>
            <person name="Lui A."/>
            <person name="Macdonald P."/>
            <person name="Major J.E."/>
            <person name="Matthews L."/>
            <person name="Mauceli E."/>
            <person name="McCarroll S.A."/>
            <person name="Mihalev A.H."/>
            <person name="Mudge J."/>
            <person name="Nguyen C."/>
            <person name="Nicol R."/>
            <person name="O'Leary S.B."/>
            <person name="Osoegawa K."/>
            <person name="Schwartz D.C."/>
            <person name="Shaw-Smith C."/>
            <person name="Stankiewicz P."/>
            <person name="Steward C."/>
            <person name="Swarbreck D."/>
            <person name="Venkataraman V."/>
            <person name="Whittaker C.A."/>
            <person name="Yang X."/>
            <person name="Zimmer A.R."/>
            <person name="Bradley A."/>
            <person name="Hubbard T."/>
            <person name="Birren B.W."/>
            <person name="Rogers J."/>
            <person name="Lander E.S."/>
            <person name="Nusbaum C."/>
        </authorList>
    </citation>
    <scope>NUCLEOTIDE SEQUENCE [LARGE SCALE GENOMIC DNA]</scope>
</reference>
<reference key="5">
    <citation type="submission" date="2005-09" db="EMBL/GenBank/DDBJ databases">
        <authorList>
            <person name="Mural R.J."/>
            <person name="Istrail S."/>
            <person name="Sutton G.G."/>
            <person name="Florea L."/>
            <person name="Halpern A.L."/>
            <person name="Mobarry C.M."/>
            <person name="Lippert R."/>
            <person name="Walenz B."/>
            <person name="Shatkay H."/>
            <person name="Dew I."/>
            <person name="Miller J.R."/>
            <person name="Flanigan M.J."/>
            <person name="Edwards N.J."/>
            <person name="Bolanos R."/>
            <person name="Fasulo D."/>
            <person name="Halldorsson B.V."/>
            <person name="Hannenhalli S."/>
            <person name="Turner R."/>
            <person name="Yooseph S."/>
            <person name="Lu F."/>
            <person name="Nusskern D.R."/>
            <person name="Shue B.C."/>
            <person name="Zheng X.H."/>
            <person name="Zhong F."/>
            <person name="Delcher A.L."/>
            <person name="Huson D.H."/>
            <person name="Kravitz S.A."/>
            <person name="Mouchard L."/>
            <person name="Reinert K."/>
            <person name="Remington K.A."/>
            <person name="Clark A.G."/>
            <person name="Waterman M.S."/>
            <person name="Eichler E.E."/>
            <person name="Adams M.D."/>
            <person name="Hunkapiller M.W."/>
            <person name="Myers E.W."/>
            <person name="Venter J.C."/>
        </authorList>
    </citation>
    <scope>NUCLEOTIDE SEQUENCE [LARGE SCALE GENOMIC DNA]</scope>
</reference>
<reference key="6">
    <citation type="journal article" date="2004" name="Genome Res.">
        <title>The status, quality, and expansion of the NIH full-length cDNA project: the Mammalian Gene Collection (MGC).</title>
        <authorList>
            <consortium name="The MGC Project Team"/>
        </authorList>
    </citation>
    <scope>NUCLEOTIDE SEQUENCE [LARGE SCALE MRNA] (ISOFORM 2)</scope>
    <source>
        <tissue>Uterus</tissue>
    </source>
</reference>
<reference key="7">
    <citation type="journal article" date="2003" name="EMBO J.">
        <title>Mitotic regulation of the human anaphase-promoting complex by phosphorylation.</title>
        <authorList>
            <person name="Kraft C."/>
            <person name="Herzog F."/>
            <person name="Gieffers C."/>
            <person name="Mechtler K."/>
            <person name="Hagting A."/>
            <person name="Pines J."/>
            <person name="Peters J.-M."/>
        </authorList>
    </citation>
    <scope>PHOSPHORYLATION AT THR-205; THR-209; THR-244; SER-291; THR-313; SER-426; THR-430; SER-435 AND THR-446</scope>
</reference>
<reference key="8">
    <citation type="journal article" date="2006" name="Nat. Biotechnol.">
        <title>A probability-based approach for high-throughput protein phosphorylation analysis and site localization.</title>
        <authorList>
            <person name="Beausoleil S.A."/>
            <person name="Villen J."/>
            <person name="Gerber S.A."/>
            <person name="Rush J."/>
            <person name="Gygi S.P."/>
        </authorList>
    </citation>
    <scope>IDENTIFICATION BY MASS SPECTROMETRY [LARGE SCALE ANALYSIS]</scope>
    <source>
        <tissue>Cervix carcinoma</tissue>
    </source>
</reference>
<reference key="9">
    <citation type="journal article" date="2008" name="Cell">
        <title>Mechanism of ubiquitin-chain formation by the human anaphase-promoting complex.</title>
        <authorList>
            <person name="Jin L."/>
            <person name="Williamson A."/>
            <person name="Banerjee S."/>
            <person name="Philipp I."/>
            <person name="Rape M."/>
        </authorList>
    </citation>
    <scope>FUNCTION OF THE APC/C</scope>
</reference>
<reference key="10">
    <citation type="journal article" date="2008" name="J. Cell Sci.">
        <title>EML3 is a nuclear microtubule-binding protein required for the correct alignment of chromosomes in metaphase.</title>
        <authorList>
            <person name="Tegha-Dunghu J."/>
            <person name="Neumann B."/>
            <person name="Reber S."/>
            <person name="Krause R."/>
            <person name="Erfle H."/>
            <person name="Walter T."/>
            <person name="Held M."/>
            <person name="Rogers P."/>
            <person name="Hupfeld K."/>
            <person name="Ruppert T."/>
            <person name="Ellenberg J."/>
            <person name="Gruss O.J."/>
        </authorList>
    </citation>
    <scope>SUBCELLULAR LOCATION</scope>
</reference>
<reference key="11">
    <citation type="journal article" date="2008" name="Proc. Natl. Acad. Sci. U.S.A.">
        <title>A quantitative atlas of mitotic phosphorylation.</title>
        <authorList>
            <person name="Dephoure N."/>
            <person name="Zhou C."/>
            <person name="Villen J."/>
            <person name="Beausoleil S.A."/>
            <person name="Bakalarski C.E."/>
            <person name="Elledge S.J."/>
            <person name="Gygi S.P."/>
        </authorList>
    </citation>
    <scope>PHOSPHORYLATION [LARGE SCALE ANALYSIS] AT THR-205; SER-339; SER-426; SER-438 AND THR-446</scope>
    <scope>IDENTIFICATION BY MASS SPECTROMETRY [LARGE SCALE ANALYSIS]</scope>
    <source>
        <tissue>Cervix carcinoma</tissue>
    </source>
</reference>
<reference key="12">
    <citation type="journal article" date="2009" name="Anal. Chem.">
        <title>Lys-N and trypsin cover complementary parts of the phosphoproteome in a refined SCX-based approach.</title>
        <authorList>
            <person name="Gauci S."/>
            <person name="Helbig A.O."/>
            <person name="Slijper M."/>
            <person name="Krijgsveld J."/>
            <person name="Heck A.J."/>
            <person name="Mohammed S."/>
        </authorList>
    </citation>
    <scope>IDENTIFICATION BY MASS SPECTROMETRY [LARGE SCALE ANALYSIS]</scope>
</reference>
<reference key="13">
    <citation type="journal article" date="2009" name="Sci. Signal.">
        <title>Quantitative phosphoproteomic analysis of T cell receptor signaling reveals system-wide modulation of protein-protein interactions.</title>
        <authorList>
            <person name="Mayya V."/>
            <person name="Lundgren D.H."/>
            <person name="Hwang S.-I."/>
            <person name="Rezaul K."/>
            <person name="Wu L."/>
            <person name="Eng J.K."/>
            <person name="Rodionov V."/>
            <person name="Han D.K."/>
        </authorList>
    </citation>
    <scope>PHOSPHORYLATION [LARGE SCALE ANALYSIS] AT THR-366</scope>
    <scope>IDENTIFICATION BY MASS SPECTROMETRY [LARGE SCALE ANALYSIS]</scope>
    <source>
        <tissue>Leukemic T-cell</tissue>
    </source>
</reference>
<reference key="14">
    <citation type="journal article" date="2010" name="Sci. Signal.">
        <title>Quantitative phosphoproteomics reveals widespread full phosphorylation site occupancy during mitosis.</title>
        <authorList>
            <person name="Olsen J.V."/>
            <person name="Vermeulen M."/>
            <person name="Santamaria A."/>
            <person name="Kumar C."/>
            <person name="Miller M.L."/>
            <person name="Jensen L.J."/>
            <person name="Gnad F."/>
            <person name="Cox J."/>
            <person name="Jensen T.S."/>
            <person name="Nigg E.A."/>
            <person name="Brunak S."/>
            <person name="Mann M."/>
        </authorList>
    </citation>
    <scope>PHOSPHORYLATION [LARGE SCALE ANALYSIS] AT SER-386</scope>
    <scope>IDENTIFICATION BY MASS SPECTROMETRY [LARGE SCALE ANALYSIS]</scope>
    <source>
        <tissue>Cervix carcinoma</tissue>
    </source>
</reference>
<reference key="15">
    <citation type="journal article" date="2011" name="BMC Syst. Biol.">
        <title>Initial characterization of the human central proteome.</title>
        <authorList>
            <person name="Burkard T.R."/>
            <person name="Planyavsky M."/>
            <person name="Kaupe I."/>
            <person name="Breitwieser F.P."/>
            <person name="Buerckstuemmer T."/>
            <person name="Bennett K.L."/>
            <person name="Superti-Furga G."/>
            <person name="Colinge J."/>
        </authorList>
    </citation>
    <scope>IDENTIFICATION BY MASS SPECTROMETRY [LARGE SCALE ANALYSIS]</scope>
</reference>
<reference key="16">
    <citation type="journal article" date="2011" name="Nature">
        <title>Structural basis for the subunit assembly of the anaphase-promoting complex.</title>
        <authorList>
            <person name="Schreiber A."/>
            <person name="Stengel F."/>
            <person name="Zhang Z."/>
            <person name="Enchev R.I."/>
            <person name="Kong E.H."/>
            <person name="Morris E.P."/>
            <person name="Robinson C.V."/>
            <person name="da Fonseca P.C."/>
            <person name="Barford D."/>
        </authorList>
    </citation>
    <scope>TPR REPEATS</scope>
</reference>
<reference key="17">
    <citation type="journal article" date="2013" name="J. Proteome Res.">
        <title>Toward a comprehensive characterization of a human cancer cell phosphoproteome.</title>
        <authorList>
            <person name="Zhou H."/>
            <person name="Di Palma S."/>
            <person name="Preisinger C."/>
            <person name="Peng M."/>
            <person name="Polat A.N."/>
            <person name="Heck A.J."/>
            <person name="Mohammed S."/>
        </authorList>
    </citation>
    <scope>PHOSPHORYLATION [LARGE SCALE ANALYSIS] AT THR-205; SER-379; SER-426 AND THR-446</scope>
    <scope>IDENTIFICATION BY MASS SPECTROMETRY [LARGE SCALE ANALYSIS]</scope>
    <source>
        <tissue>Cervix carcinoma</tissue>
        <tissue>Erythroleukemia</tissue>
    </source>
</reference>
<reference key="18">
    <citation type="journal article" date="2017" name="Cell">
        <title>Assembly and function of heterotypic ubiquitin chains in cell-cycle and protein quality control.</title>
        <authorList>
            <person name="Yau R.G."/>
            <person name="Doerner K."/>
            <person name="Castellanos E.R."/>
            <person name="Haakonsen D.L."/>
            <person name="Werner A."/>
            <person name="Wang N."/>
            <person name="Yang X.W."/>
            <person name="Martinez-Martin N."/>
            <person name="Matsumoto M.L."/>
            <person name="Dixit V.M."/>
            <person name="Rape M."/>
        </authorList>
    </citation>
    <scope>FUNCTION</scope>
    <scope>PATHWAY</scope>
</reference>
<reference key="19">
    <citation type="journal article" date="2005" name="Mol. Cell">
        <title>Localization of the coactivator Cdh1 and the cullin subunit Apc2 in a cryo-electron microscopy model of vertebrate APC/C.</title>
        <authorList>
            <person name="Dube P."/>
            <person name="Herzog F."/>
            <person name="Gieffers C."/>
            <person name="Sander B."/>
            <person name="Riedel D."/>
            <person name="Mueller S.A."/>
            <person name="Engel A."/>
            <person name="Peters J.-M."/>
            <person name="Stark H."/>
        </authorList>
    </citation>
    <scope>STRUCTURE BY ELECTRON MICROSCOPY OF THE APC/C</scope>
</reference>
<reference key="20">
    <citation type="journal article" date="2012" name="J. Biol. Chem.">
        <title>Molecular basis for the association of microcephalin (MCPH1) protein with the cell division cycle protein 27 (Cdc27) subunit of the anaphase-promoting complex.</title>
        <authorList>
            <person name="Singh N."/>
            <person name="Wiltshire T.D."/>
            <person name="Thompson J.R."/>
            <person name="Mer G."/>
            <person name="Couch F.J."/>
        </authorList>
    </citation>
    <scope>X-RAY CRYSTALLOGRAPHY (2.6 ANGSTROMS) OF 821-824 IN COMPLEX WITH MCPH1</scope>
    <scope>PHOSPHORYLATION AT SER-821</scope>
    <scope>MUTAGENESIS OF SER-821</scope>
</reference>
<reference key="21">
    <citation type="journal article" date="2014" name="Nature">
        <title>Molecular architecture and mechanism of the anaphase-promoting complex.</title>
        <authorList>
            <person name="Chang L."/>
            <person name="Zhang Z."/>
            <person name="Yang J."/>
            <person name="McLaughlin S.H."/>
            <person name="Barford D."/>
        </authorList>
    </citation>
    <scope>STRUCTURE BY ELECTRON MICROSCOPY (7.4 ANGSTROMS) OF THE APC/C</scope>
    <scope>SUBUNIT</scope>
</reference>
<reference evidence="14 15" key="22">
    <citation type="journal article" date="2015" name="Nature">
        <title>Atomic structure of the APC/C and its mechanism of protein ubiquitination.</title>
        <authorList>
            <person name="Chang L."/>
            <person name="Zhang Z."/>
            <person name="Yang J."/>
            <person name="McLaughlin S.H."/>
            <person name="Barford D."/>
        </authorList>
    </citation>
    <scope>STRUCTURE BY ELECTRON MICROSCOPY (3.60 ANGSTROMS) OF APC/C</scope>
    <scope>SUBUNIT</scope>
</reference>
<reference key="23">
    <citation type="journal article" date="2006" name="Science">
        <title>The consensus coding sequences of human breast and colorectal cancers.</title>
        <authorList>
            <person name="Sjoeblom T."/>
            <person name="Jones S."/>
            <person name="Wood L.D."/>
            <person name="Parsons D.W."/>
            <person name="Lin J."/>
            <person name="Barber T.D."/>
            <person name="Mandelker D."/>
            <person name="Leary R.J."/>
            <person name="Ptak J."/>
            <person name="Silliman N."/>
            <person name="Szabo S."/>
            <person name="Buckhaults P."/>
            <person name="Farrell C."/>
            <person name="Meeh P."/>
            <person name="Markowitz S.D."/>
            <person name="Willis J."/>
            <person name="Dawson D."/>
            <person name="Willson J.K.V."/>
            <person name="Gazdar A.F."/>
            <person name="Hartigan J."/>
            <person name="Wu L."/>
            <person name="Liu C."/>
            <person name="Parmigiani G."/>
            <person name="Park B.H."/>
            <person name="Bachman K.E."/>
            <person name="Papadopoulos N."/>
            <person name="Vogelstein B."/>
            <person name="Kinzler K.W."/>
            <person name="Velculescu V.E."/>
        </authorList>
    </citation>
    <scope>VARIANT [LARGE SCALE ANALYSIS] ALA-270</scope>
</reference>
<evidence type="ECO:0000250" key="1"/>
<evidence type="ECO:0000250" key="2">
    <source>
        <dbReference type="UniProtKB" id="A2A6Q5"/>
    </source>
</evidence>
<evidence type="ECO:0000256" key="3">
    <source>
        <dbReference type="SAM" id="MobiDB-lite"/>
    </source>
</evidence>
<evidence type="ECO:0000269" key="4">
    <source>
    </source>
</evidence>
<evidence type="ECO:0000269" key="5">
    <source>
    </source>
</evidence>
<evidence type="ECO:0000269" key="6">
    <source>
    </source>
</evidence>
<evidence type="ECO:0000269" key="7">
    <source>
    </source>
</evidence>
<evidence type="ECO:0000269" key="8">
    <source>
    </source>
</evidence>
<evidence type="ECO:0000269" key="9">
    <source>
    </source>
</evidence>
<evidence type="ECO:0000269" key="10">
    <source>
    </source>
</evidence>
<evidence type="ECO:0000269" key="11">
    <source>
    </source>
</evidence>
<evidence type="ECO:0000303" key="12">
    <source>
    </source>
</evidence>
<evidence type="ECO:0000305" key="13"/>
<evidence type="ECO:0007744" key="14">
    <source>
        <dbReference type="PDB" id="4UI9"/>
    </source>
</evidence>
<evidence type="ECO:0007744" key="15">
    <source>
        <dbReference type="PDB" id="5A31"/>
    </source>
</evidence>
<evidence type="ECO:0007744" key="16">
    <source>
    </source>
</evidence>
<evidence type="ECO:0007744" key="17">
    <source>
    </source>
</evidence>
<evidence type="ECO:0007744" key="18">
    <source>
    </source>
</evidence>
<evidence type="ECO:0007744" key="19">
    <source>
    </source>
</evidence>
<evidence type="ECO:0007829" key="20">
    <source>
        <dbReference type="PDB" id="5G05"/>
    </source>
</evidence>
<evidence type="ECO:0007829" key="21">
    <source>
        <dbReference type="PDB" id="6Q6G"/>
    </source>
</evidence>
<evidence type="ECO:0007829" key="22">
    <source>
        <dbReference type="PDB" id="9GAW"/>
    </source>
</evidence>
<comment type="function">
    <text evidence="7 11">Component of the anaphase promoting complex/cyclosome (APC/C), a cell cycle-regulated E3 ubiquitin ligase that controls progression through mitosis and the G1 phase of the cell cycle (PubMed:18485873). The APC/C complex acts by mediating ubiquitination and subsequent degradation of target proteins: it mainly mediates the formation of 'Lys-11'-linked polyubiquitin chains and, to a lower extent, the formation of 'Lys-48'- and 'Lys-63'-linked polyubiquitin chains (PubMed:18485873). The APC/C complex catalyzes assembly of branched 'Lys-11'-/'Lys-48'-linked branched ubiquitin chains on target proteins (PubMed:29033132).</text>
</comment>
<comment type="pathway">
    <text evidence="11">Protein modification; protein ubiquitination.</text>
</comment>
<comment type="subunit">
    <text evidence="1 2 8 9 10">Homodimer. The mammalian APC/C is composed at least of 14 distinct subunits ANAPC1, ANAPC2, CDC27/APC3, ANAPC4, ANAPC5, CDC16/APC6, ANAPC7, CDC23/APC8, ANAPC10, ANAPC11, CDC26/APC12, ANAPC13, ANAPC15 and ANAPC16 that assemble into a complex of at least 19 chains with a combined molecular mass of around 1.2 MDa; APC/C interacts with FZR1 and FBXO5 (PubMed:25043029, PubMed:26083744). Interacts with RB. Interacts with FAM168B/MANI (By similarity). Interacts with MCPH1 (PubMed:22139841).</text>
</comment>
<comment type="interaction">
    <interactant intactId="EBI-994813">
        <id>P30260</id>
    </interactant>
    <interactant intactId="EBI-2554854">
        <id>Q9UJX5</id>
        <label>ANAPC4</label>
    </interactant>
    <organismsDiffer>false</organismsDiffer>
    <experiments>10</experiments>
</comment>
<comment type="interaction">
    <interactant intactId="EBI-994813">
        <id>P30260</id>
    </interactant>
    <interactant intactId="EBI-375001">
        <id>P24385</id>
        <label>CCND1</label>
    </interactant>
    <organismsDiffer>false</organismsDiffer>
    <experiments>3</experiments>
</comment>
<comment type="interaction">
    <interactant intactId="EBI-994813">
        <id>P30260</id>
    </interactant>
    <interactant intactId="EBI-367462">
        <id>Q12834</id>
        <label>CDC20</label>
    </interactant>
    <organismsDiffer>false</organismsDiffer>
    <experiments>14</experiments>
</comment>
<comment type="interaction">
    <interactant intactId="EBI-994813">
        <id>P30260</id>
    </interactant>
    <interactant intactId="EBI-727477">
        <id>P12830</id>
        <label>CDH1</label>
    </interactant>
    <organismsDiffer>false</organismsDiffer>
    <experiments>2</experiments>
</comment>
<comment type="interaction">
    <interactant intactId="EBI-994813">
        <id>P30260</id>
    </interactant>
    <interactant intactId="EBI-10200977">
        <id>P21964-2</id>
        <label>COMT</label>
    </interactant>
    <organismsDiffer>false</organismsDiffer>
    <experiments>3</experiments>
</comment>
<comment type="interaction">
    <interactant intactId="EBI-994813">
        <id>P30260</id>
    </interactant>
    <interactant intactId="EBI-852298">
        <id>Q9UKT4</id>
        <label>FBXO5</label>
    </interactant>
    <organismsDiffer>false</organismsDiffer>
    <experiments>3</experiments>
</comment>
<comment type="interaction">
    <interactant intactId="EBI-994813">
        <id>P30260</id>
    </interactant>
    <interactant intactId="EBI-1644164">
        <id>O43524</id>
        <label>FOXO3</label>
    </interactant>
    <organismsDiffer>false</organismsDiffer>
    <experiments>2</experiments>
</comment>
<comment type="interaction">
    <interactant intactId="EBI-994813">
        <id>P30260</id>
    </interactant>
    <interactant intactId="EBI-724997">
        <id>Q9UM11</id>
        <label>FZR1</label>
    </interactant>
    <organismsDiffer>false</organismsDiffer>
    <experiments>15</experiments>
</comment>
<comment type="interaction">
    <interactant intactId="EBI-994813">
        <id>P30260</id>
    </interactant>
    <interactant intactId="EBI-78203">
        <id>Q13257</id>
        <label>MAD2L1</label>
    </interactant>
    <organismsDiffer>false</organismsDiffer>
    <experiments>10</experiments>
</comment>
<comment type="interaction">
    <interactant intactId="EBI-994813">
        <id>P30260</id>
    </interactant>
    <interactant intactId="EBI-77889">
        <id>Q9UI95</id>
        <label>MAD2L2</label>
    </interactant>
    <organismsDiffer>false</organismsDiffer>
    <experiments>2</experiments>
</comment>
<comment type="interaction">
    <interactant intactId="EBI-994813">
        <id>P30260</id>
    </interactant>
    <interactant intactId="EBI-389883">
        <id>P16333</id>
        <label>NCK1</label>
    </interactant>
    <organismsDiffer>false</organismsDiffer>
    <experiments>3</experiments>
</comment>
<comment type="interaction">
    <interactant intactId="EBI-994813">
        <id>P30260</id>
    </interactant>
    <interactant intactId="EBI-633182">
        <id>P51955</id>
        <label>NEK2</label>
    </interactant>
    <organismsDiffer>false</organismsDiffer>
    <experiments>3</experiments>
</comment>
<comment type="interaction">
    <interactant intactId="EBI-994813">
        <id>P30260</id>
    </interactant>
    <interactant intactId="EBI-696162">
        <id>P60484</id>
        <label>PTEN</label>
    </interactant>
    <organismsDiffer>false</organismsDiffer>
    <experiments>7</experiments>
</comment>
<comment type="subcellular location">
    <subcellularLocation>
        <location evidence="6">Nucleus</location>
    </subcellularLocation>
    <subcellularLocation>
        <location evidence="6">Cytoplasm</location>
        <location evidence="6">Cytoskeleton</location>
        <location evidence="6">Spindle</location>
    </subcellularLocation>
</comment>
<comment type="alternative products">
    <event type="alternative splicing"/>
    <isoform>
        <id>P30260-1</id>
        <name>1</name>
        <sequence type="displayed"/>
    </isoform>
    <isoform>
        <id>P30260-2</id>
        <name>2</name>
        <sequence type="described" ref="VSP_047225"/>
    </isoform>
</comment>
<comment type="PTM">
    <text evidence="4 8">Phosphorylated. Phosphorylation on Ser-426 and Thr-446 occurs specifically during mitosis.</text>
</comment>
<comment type="miscellaneous">
    <molecule>Isoform 2</molecule>
    <text evidence="13">May be due to competing acceptor splice site.</text>
</comment>
<comment type="similarity">
    <text evidence="13">Belongs to the APC3/CDC27 family.</text>
</comment>
<sequence length="824" mass="91867">MTVLQEPVQAAIWQALNHYAYRDAVFLAERLYAEVHSEEALFLLATCYYRSGKAYKAYRLLKGHSCTTPQCKYLLAKCCVDLSKLAEGEQILSGGVFNKQKSHDDIVTEFGDSACFTLSLLGHVYCKTDRLAKGSECYQKSLSLNPFLWSPFESLCEIGEKPDPDQTFKFTSLQNFSNCLPNSCTTQVPNHSLSHRQPETVLTETPQDTIELNRLNLESSNSKYSLNTDSSVSYIDSAVISPDTVPLGTGTSILSKQVQNKPKTGRSLLGGPAALSPLTPSFGILPLETPSPGDGSYLQNYTNTPPVIDVPSTGAPSKKSVARIGQTGTKSVFSQSGNSREVTPILAQTQSSGPQTSTTPQVLSPTITSPPNALPRRSSRLFTSDSSTTKENSKKLKMKFPPKIPNRKTKSKTNKGGITQPNINDSLEITKLDSSIISEGKISTITPQIQAFNLQKAAAEGLMSLLREMGKGYLALCSYNCKEAINILSHLPSHHYNTGWVLCQIGRAYFELSEYMQAERIFSEVRRIENYRVEGMEIYSTTLWHLQKDVALSVLSKDLTDMDKNSPEAWCAAGNCFSLQREHDIAIKFFQRAIQVDPNYAYAYTLLGHEFVLTEELDKALACFRNAIRVNPRHYNAWYGLGMIYYKQEKFSLAEMHFQKALDINPQSSVLLCHIGVVQHALKKSEKALDTLNKAIVIDPKNPLCKFHRASVLFANEKYKSALQELEELKQIVPKESLVYFLIGKVYKKLGQTHLALMNFSWAMDLDPKGANNQIKEAIDKRYLPDDEEPITQEEQIMGTDESQESSMTDADDTQLHAAESDEF</sequence>
<dbReference type="EMBL" id="U00001">
    <property type="protein sequence ID" value="AAA60471.1"/>
    <property type="molecule type" value="mRNA"/>
</dbReference>
<dbReference type="EMBL" id="S78234">
    <property type="protein sequence ID" value="AAB34378.1"/>
    <property type="molecule type" value="mRNA"/>
</dbReference>
<dbReference type="EMBL" id="AY518321">
    <property type="protein sequence ID" value="AAR89911.1"/>
    <property type="molecule type" value="Genomic_DNA"/>
</dbReference>
<dbReference type="EMBL" id="AC002558">
    <property type="status" value="NOT_ANNOTATED_CDS"/>
    <property type="molecule type" value="Genomic_DNA"/>
</dbReference>
<dbReference type="EMBL" id="CH471231">
    <property type="protein sequence ID" value="EAW57687.1"/>
    <property type="molecule type" value="Genomic_DNA"/>
</dbReference>
<dbReference type="EMBL" id="BC011656">
    <property type="protein sequence ID" value="AAH11656.1"/>
    <property type="molecule type" value="mRNA"/>
</dbReference>
<dbReference type="CCDS" id="CCDS11509.1">
    <molecule id="P30260-1"/>
</dbReference>
<dbReference type="CCDS" id="CCDS45720.1">
    <molecule id="P30260-2"/>
</dbReference>
<dbReference type="PIR" id="I52835">
    <property type="entry name" value="I52835"/>
</dbReference>
<dbReference type="RefSeq" id="NP_001107563.1">
    <molecule id="P30260-2"/>
    <property type="nucleotide sequence ID" value="NM_001114091.4"/>
</dbReference>
<dbReference type="RefSeq" id="NP_001247.3">
    <molecule id="P30260-1"/>
    <property type="nucleotide sequence ID" value="NM_001256.4"/>
</dbReference>
<dbReference type="PDB" id="3T1N">
    <property type="method" value="X-ray"/>
    <property type="resolution" value="2.60 A"/>
    <property type="chains" value="C/D=821-824"/>
</dbReference>
<dbReference type="PDB" id="4RG6">
    <property type="method" value="X-ray"/>
    <property type="resolution" value="3.30 A"/>
    <property type="chains" value="A/B=1-824"/>
</dbReference>
<dbReference type="PDB" id="4RG7">
    <property type="method" value="X-ray"/>
    <property type="resolution" value="4.25 A"/>
    <property type="chains" value="A/B=1-824"/>
</dbReference>
<dbReference type="PDB" id="4RG9">
    <property type="method" value="X-ray"/>
    <property type="resolution" value="3.25 A"/>
    <property type="chains" value="A/B=1-824"/>
</dbReference>
<dbReference type="PDB" id="4UI9">
    <property type="method" value="EM"/>
    <property type="resolution" value="3.60 A"/>
    <property type="chains" value="F/H=1-824"/>
</dbReference>
<dbReference type="PDB" id="5A31">
    <property type="method" value="EM"/>
    <property type="resolution" value="4.30 A"/>
    <property type="chains" value="F/H=1-824"/>
</dbReference>
<dbReference type="PDB" id="5G04">
    <property type="method" value="EM"/>
    <property type="resolution" value="4.00 A"/>
    <property type="chains" value="F/H=1-824"/>
</dbReference>
<dbReference type="PDB" id="5G05">
    <property type="method" value="EM"/>
    <property type="resolution" value="3.40 A"/>
    <property type="chains" value="F/H=1-824"/>
</dbReference>
<dbReference type="PDB" id="5KHR">
    <property type="method" value="EM"/>
    <property type="resolution" value="6.10 A"/>
    <property type="chains" value="F/H=1-824"/>
</dbReference>
<dbReference type="PDB" id="5KHU">
    <property type="method" value="EM"/>
    <property type="resolution" value="4.80 A"/>
    <property type="chains" value="F/H=1-824"/>
</dbReference>
<dbReference type="PDB" id="5L9T">
    <property type="method" value="EM"/>
    <property type="resolution" value="6.40 A"/>
    <property type="chains" value="F/H=1-824"/>
</dbReference>
<dbReference type="PDB" id="5L9U">
    <property type="method" value="EM"/>
    <property type="resolution" value="6.40 A"/>
    <property type="chains" value="F/H=1-824"/>
</dbReference>
<dbReference type="PDB" id="5LCW">
    <property type="method" value="EM"/>
    <property type="resolution" value="4.00 A"/>
    <property type="chains" value="F/H=1-824"/>
</dbReference>
<dbReference type="PDB" id="6Q6G">
    <property type="method" value="EM"/>
    <property type="resolution" value="3.20 A"/>
    <property type="chains" value="J/P=1-824"/>
</dbReference>
<dbReference type="PDB" id="6Q6H">
    <property type="method" value="EM"/>
    <property type="resolution" value="3.20 A"/>
    <property type="chains" value="J/P=1-824"/>
</dbReference>
<dbReference type="PDB" id="6TLJ">
    <property type="method" value="EM"/>
    <property type="resolution" value="3.80 A"/>
    <property type="chains" value="F/H=1-824"/>
</dbReference>
<dbReference type="PDB" id="6TM5">
    <property type="method" value="EM"/>
    <property type="resolution" value="3.90 A"/>
    <property type="chains" value="F/H=1-824"/>
</dbReference>
<dbReference type="PDB" id="6TNT">
    <property type="method" value="EM"/>
    <property type="resolution" value="3.78 A"/>
    <property type="chains" value="F/H=1-824"/>
</dbReference>
<dbReference type="PDB" id="8PKP">
    <property type="method" value="EM"/>
    <property type="resolution" value="3.20 A"/>
    <property type="chains" value="J/P=1-824"/>
</dbReference>
<dbReference type="PDB" id="8TAR">
    <property type="method" value="EM"/>
    <property type="resolution" value="4.00 A"/>
    <property type="chains" value="J/P=1-824"/>
</dbReference>
<dbReference type="PDB" id="8TAU">
    <property type="method" value="EM"/>
    <property type="resolution" value="3.50 A"/>
    <property type="chains" value="J/P=1-824"/>
</dbReference>
<dbReference type="PDB" id="9FGQ">
    <property type="method" value="EM"/>
    <property type="resolution" value="2.50 A"/>
    <property type="chains" value="K/L=177-446"/>
</dbReference>
<dbReference type="PDB" id="9GAW">
    <property type="method" value="EM"/>
    <property type="resolution" value="2.90 A"/>
    <property type="chains" value="J/P=1-824"/>
</dbReference>
<dbReference type="PDBsum" id="3T1N"/>
<dbReference type="PDBsum" id="4RG6"/>
<dbReference type="PDBsum" id="4RG7"/>
<dbReference type="PDBsum" id="4RG9"/>
<dbReference type="PDBsum" id="4UI9"/>
<dbReference type="PDBsum" id="5A31"/>
<dbReference type="PDBsum" id="5G04"/>
<dbReference type="PDBsum" id="5G05"/>
<dbReference type="PDBsum" id="5KHR"/>
<dbReference type="PDBsum" id="5KHU"/>
<dbReference type="PDBsum" id="5L9T"/>
<dbReference type="PDBsum" id="5L9U"/>
<dbReference type="PDBsum" id="5LCW"/>
<dbReference type="PDBsum" id="6Q6G"/>
<dbReference type="PDBsum" id="6Q6H"/>
<dbReference type="PDBsum" id="6TLJ"/>
<dbReference type="PDBsum" id="6TM5"/>
<dbReference type="PDBsum" id="6TNT"/>
<dbReference type="PDBsum" id="8PKP"/>
<dbReference type="PDBsum" id="8TAR"/>
<dbReference type="PDBsum" id="8TAU"/>
<dbReference type="PDBsum" id="9FGQ"/>
<dbReference type="PDBsum" id="9GAW"/>
<dbReference type="EMDB" id="EMD-10516"/>
<dbReference type="EMDB" id="EMD-10518"/>
<dbReference type="EMDB" id="EMD-10536"/>
<dbReference type="EMDB" id="EMD-13931"/>
<dbReference type="EMDB" id="EMD-17751"/>
<dbReference type="EMDB" id="EMD-19711"/>
<dbReference type="EMDB" id="EMD-2924"/>
<dbReference type="EMDB" id="EMD-2925"/>
<dbReference type="EMDB" id="EMD-3385"/>
<dbReference type="EMDB" id="EMD-3386"/>
<dbReference type="EMDB" id="EMD-3387"/>
<dbReference type="EMDB" id="EMD-3388"/>
<dbReference type="EMDB" id="EMD-3389"/>
<dbReference type="EMDB" id="EMD-3390"/>
<dbReference type="EMDB" id="EMD-3433"/>
<dbReference type="EMDB" id="EMD-4037"/>
<dbReference type="EMDB" id="EMD-41140"/>
<dbReference type="EMDB" id="EMD-41142"/>
<dbReference type="EMDB" id="EMD-4465"/>
<dbReference type="EMDB" id="EMD-4466"/>
<dbReference type="EMDB" id="EMD-4467"/>
<dbReference type="EMDB" id="EMD-50416"/>
<dbReference type="EMDB" id="EMD-51190"/>
<dbReference type="SMR" id="P30260"/>
<dbReference type="BioGRID" id="107431">
    <property type="interactions" value="278"/>
</dbReference>
<dbReference type="ComplexPortal" id="CPX-1860">
    <property type="entry name" value="Anaphase-promoting core complex"/>
</dbReference>
<dbReference type="CORUM" id="P30260"/>
<dbReference type="DIP" id="DIP-36422N"/>
<dbReference type="ELM" id="P30260"/>
<dbReference type="FunCoup" id="P30260">
    <property type="interactions" value="4930"/>
</dbReference>
<dbReference type="IntAct" id="P30260">
    <property type="interactions" value="123"/>
</dbReference>
<dbReference type="MINT" id="P30260"/>
<dbReference type="STRING" id="9606.ENSP00000434614"/>
<dbReference type="GlyGen" id="P30260">
    <property type="glycosylation" value="4 sites, 2 N-linked glycans (1 site), 1 O-linked glycan (3 sites)"/>
</dbReference>
<dbReference type="iPTMnet" id="P30260"/>
<dbReference type="PhosphoSitePlus" id="P30260"/>
<dbReference type="SwissPalm" id="P30260"/>
<dbReference type="BioMuta" id="CDC27"/>
<dbReference type="DMDM" id="12644198"/>
<dbReference type="jPOST" id="P30260"/>
<dbReference type="MassIVE" id="P30260"/>
<dbReference type="PaxDb" id="9606-ENSP00000434614"/>
<dbReference type="PeptideAtlas" id="P30260"/>
<dbReference type="ProteomicsDB" id="32326"/>
<dbReference type="ProteomicsDB" id="54645">
    <molecule id="P30260-1"/>
</dbReference>
<dbReference type="Pumba" id="P30260"/>
<dbReference type="Antibodypedia" id="3817">
    <property type="antibodies" value="495 antibodies from 42 providers"/>
</dbReference>
<dbReference type="DNASU" id="996"/>
<dbReference type="Ensembl" id="ENST00000066544.8">
    <molecule id="P30260-1"/>
    <property type="protein sequence ID" value="ENSP00000066544.3"/>
    <property type="gene ID" value="ENSG00000004897.12"/>
</dbReference>
<dbReference type="Ensembl" id="ENST00000531206.5">
    <molecule id="P30260-2"/>
    <property type="protein sequence ID" value="ENSP00000434614.1"/>
    <property type="gene ID" value="ENSG00000004897.12"/>
</dbReference>
<dbReference type="GeneID" id="996"/>
<dbReference type="KEGG" id="hsa:996"/>
<dbReference type="MANE-Select" id="ENST00000066544.8">
    <property type="protein sequence ID" value="ENSP00000066544.3"/>
    <property type="RefSeq nucleotide sequence ID" value="NM_001256.6"/>
    <property type="RefSeq protein sequence ID" value="NP_001247.3"/>
</dbReference>
<dbReference type="UCSC" id="uc002ild.5">
    <molecule id="P30260-1"/>
    <property type="organism name" value="human"/>
</dbReference>
<dbReference type="AGR" id="HGNC:1728"/>
<dbReference type="CTD" id="996"/>
<dbReference type="DisGeNET" id="996"/>
<dbReference type="GeneCards" id="CDC27"/>
<dbReference type="HGNC" id="HGNC:1728">
    <property type="gene designation" value="CDC27"/>
</dbReference>
<dbReference type="HPA" id="ENSG00000004897">
    <property type="expression patterns" value="Low tissue specificity"/>
</dbReference>
<dbReference type="MalaCards" id="CDC27"/>
<dbReference type="MIM" id="116946">
    <property type="type" value="gene"/>
</dbReference>
<dbReference type="neXtProt" id="NX_P30260"/>
<dbReference type="OpenTargets" id="ENSG00000004897"/>
<dbReference type="PharmGKB" id="PA26261"/>
<dbReference type="VEuPathDB" id="HostDB:ENSG00000004897"/>
<dbReference type="eggNOG" id="KOG1126">
    <property type="taxonomic scope" value="Eukaryota"/>
</dbReference>
<dbReference type="GeneTree" id="ENSGT00950000182950"/>
<dbReference type="InParanoid" id="P30260"/>
<dbReference type="OMA" id="WHSPQAW"/>
<dbReference type="OrthoDB" id="329563at2759"/>
<dbReference type="PAN-GO" id="P30260">
    <property type="GO annotations" value="7 GO annotations based on evolutionary models"/>
</dbReference>
<dbReference type="PhylomeDB" id="P30260"/>
<dbReference type="TreeFam" id="TF101058"/>
<dbReference type="PathwayCommons" id="P30260"/>
<dbReference type="Reactome" id="R-HSA-141430">
    <property type="pathway name" value="Inactivation of APC/C via direct inhibition of the APC/C complex"/>
</dbReference>
<dbReference type="Reactome" id="R-HSA-174048">
    <property type="pathway name" value="APC/C:Cdc20 mediated degradation of Cyclin B"/>
</dbReference>
<dbReference type="Reactome" id="R-HSA-174084">
    <property type="pathway name" value="Autodegradation of Cdh1 by Cdh1:APC/C"/>
</dbReference>
<dbReference type="Reactome" id="R-HSA-174154">
    <property type="pathway name" value="APC/C:Cdc20 mediated degradation of Securin"/>
</dbReference>
<dbReference type="Reactome" id="R-HSA-174178">
    <property type="pathway name" value="APC/C:Cdh1 mediated degradation of Cdc20 and other APC/C:Cdh1 targeted proteins in late mitosis/early G1"/>
</dbReference>
<dbReference type="Reactome" id="R-HSA-174184">
    <property type="pathway name" value="Cdc20:Phospho-APC/C mediated degradation of Cyclin A"/>
</dbReference>
<dbReference type="Reactome" id="R-HSA-176407">
    <property type="pathway name" value="Conversion from APC/C:Cdc20 to APC/C:Cdh1 in late anaphase"/>
</dbReference>
<dbReference type="Reactome" id="R-HSA-176408">
    <property type="pathway name" value="Regulation of APC/C activators between G1/S and early anaphase"/>
</dbReference>
<dbReference type="Reactome" id="R-HSA-176409">
    <property type="pathway name" value="APC/C:Cdc20 mediated degradation of mitotic proteins"/>
</dbReference>
<dbReference type="Reactome" id="R-HSA-176412">
    <property type="pathway name" value="Phosphorylation of the APC/C"/>
</dbReference>
<dbReference type="Reactome" id="R-HSA-179409">
    <property type="pathway name" value="APC-Cdc20 mediated degradation of Nek2A"/>
</dbReference>
<dbReference type="Reactome" id="R-HSA-2467813">
    <property type="pathway name" value="Separation of Sister Chromatids"/>
</dbReference>
<dbReference type="Reactome" id="R-HSA-2559582">
    <property type="pathway name" value="Senescence-Associated Secretory Phenotype (SASP)"/>
</dbReference>
<dbReference type="Reactome" id="R-HSA-68867">
    <property type="pathway name" value="Assembly of the pre-replicative complex"/>
</dbReference>
<dbReference type="Reactome" id="R-HSA-69017">
    <property type="pathway name" value="CDK-mediated phosphorylation and removal of Cdc6"/>
</dbReference>
<dbReference type="Reactome" id="R-HSA-8853884">
    <property type="pathway name" value="Transcriptional Regulation by VENTX"/>
</dbReference>
<dbReference type="Reactome" id="R-HSA-9687136">
    <property type="pathway name" value="Aberrant regulation of mitotic exit in cancer due to RB1 defects"/>
</dbReference>
<dbReference type="Reactome" id="R-HSA-983168">
    <property type="pathway name" value="Antigen processing: Ubiquitination &amp; Proteasome degradation"/>
</dbReference>
<dbReference type="SignaLink" id="P30260"/>
<dbReference type="SIGNOR" id="P30260"/>
<dbReference type="UniPathway" id="UPA00143"/>
<dbReference type="BioGRID-ORCS" id="996">
    <property type="hits" value="799 hits in 1158 CRISPR screens"/>
</dbReference>
<dbReference type="CD-CODE" id="8C2F96ED">
    <property type="entry name" value="Centrosome"/>
</dbReference>
<dbReference type="ChiTaRS" id="CDC27">
    <property type="organism name" value="human"/>
</dbReference>
<dbReference type="EvolutionaryTrace" id="P30260"/>
<dbReference type="GeneWiki" id="CDC27"/>
<dbReference type="GenomeRNAi" id="996"/>
<dbReference type="Pharos" id="P30260">
    <property type="development level" value="Tbio"/>
</dbReference>
<dbReference type="PRO" id="PR:P30260"/>
<dbReference type="Proteomes" id="UP000005640">
    <property type="component" value="Chromosome 17"/>
</dbReference>
<dbReference type="RNAct" id="P30260">
    <property type="molecule type" value="protein"/>
</dbReference>
<dbReference type="Bgee" id="ENSG00000004897">
    <property type="expression patterns" value="Expressed in secondary oocyte and 202 other cell types or tissues"/>
</dbReference>
<dbReference type="ExpressionAtlas" id="P30260">
    <property type="expression patterns" value="baseline and differential"/>
</dbReference>
<dbReference type="GO" id="GO:0005680">
    <property type="term" value="C:anaphase-promoting complex"/>
    <property type="evidence" value="ECO:0000314"/>
    <property type="project" value="UniProtKB"/>
</dbReference>
<dbReference type="GO" id="GO:0005813">
    <property type="term" value="C:centrosome"/>
    <property type="evidence" value="ECO:0000314"/>
    <property type="project" value="MGI"/>
</dbReference>
<dbReference type="GO" id="GO:0005737">
    <property type="term" value="C:cytoplasm"/>
    <property type="evidence" value="ECO:0000314"/>
    <property type="project" value="LIFEdb"/>
</dbReference>
<dbReference type="GO" id="GO:0005829">
    <property type="term" value="C:cytosol"/>
    <property type="evidence" value="ECO:0000304"/>
    <property type="project" value="Reactome"/>
</dbReference>
<dbReference type="GO" id="GO:0072686">
    <property type="term" value="C:mitotic spindle"/>
    <property type="evidence" value="ECO:0000314"/>
    <property type="project" value="MGI"/>
</dbReference>
<dbReference type="GO" id="GO:0005654">
    <property type="term" value="C:nucleoplasm"/>
    <property type="evidence" value="ECO:0000314"/>
    <property type="project" value="HPA"/>
</dbReference>
<dbReference type="GO" id="GO:0005634">
    <property type="term" value="C:nucleus"/>
    <property type="evidence" value="ECO:0000314"/>
    <property type="project" value="UniProtKB"/>
</dbReference>
<dbReference type="GO" id="GO:0005819">
    <property type="term" value="C:spindle"/>
    <property type="evidence" value="ECO:0000314"/>
    <property type="project" value="UniProtKB"/>
</dbReference>
<dbReference type="GO" id="GO:0019903">
    <property type="term" value="F:protein phosphatase binding"/>
    <property type="evidence" value="ECO:0000353"/>
    <property type="project" value="BHF-UCL"/>
</dbReference>
<dbReference type="GO" id="GO:0031145">
    <property type="term" value="P:anaphase-promoting complex-dependent catabolic process"/>
    <property type="evidence" value="ECO:0000314"/>
    <property type="project" value="UniProtKB"/>
</dbReference>
<dbReference type="GO" id="GO:0051301">
    <property type="term" value="P:cell division"/>
    <property type="evidence" value="ECO:0000318"/>
    <property type="project" value="GO_Central"/>
</dbReference>
<dbReference type="GO" id="GO:0007091">
    <property type="term" value="P:metaphase/anaphase transition of mitotic cell cycle"/>
    <property type="evidence" value="ECO:0000315"/>
    <property type="project" value="MGI"/>
</dbReference>
<dbReference type="GO" id="GO:0031175">
    <property type="term" value="P:neuron projection development"/>
    <property type="evidence" value="ECO:0007669"/>
    <property type="project" value="Ensembl"/>
</dbReference>
<dbReference type="GO" id="GO:0141198">
    <property type="term" value="P:protein branched polyubiquitination"/>
    <property type="evidence" value="ECO:0000314"/>
    <property type="project" value="UniProtKB"/>
</dbReference>
<dbReference type="GO" id="GO:0070979">
    <property type="term" value="P:protein K11-linked ubiquitination"/>
    <property type="evidence" value="ECO:0000314"/>
    <property type="project" value="UniProtKB"/>
</dbReference>
<dbReference type="GO" id="GO:0070936">
    <property type="term" value="P:protein K48-linked ubiquitination"/>
    <property type="evidence" value="ECO:0000314"/>
    <property type="project" value="UniProtKB"/>
</dbReference>
<dbReference type="GO" id="GO:0016567">
    <property type="term" value="P:protein ubiquitination"/>
    <property type="evidence" value="ECO:0000318"/>
    <property type="project" value="GO_Central"/>
</dbReference>
<dbReference type="GO" id="GO:0051445">
    <property type="term" value="P:regulation of meiotic cell cycle"/>
    <property type="evidence" value="ECO:0000303"/>
    <property type="project" value="ComplexPortal"/>
</dbReference>
<dbReference type="GO" id="GO:0007346">
    <property type="term" value="P:regulation of mitotic cell cycle"/>
    <property type="evidence" value="ECO:0000303"/>
    <property type="project" value="ComplexPortal"/>
</dbReference>
<dbReference type="DisProt" id="DP01445"/>
<dbReference type="FunFam" id="1.25.40.10:FF:000085">
    <property type="entry name" value="Cell division cycle 27 homolog (S. cerevisiae)"/>
    <property type="match status" value="1"/>
</dbReference>
<dbReference type="FunFam" id="1.25.40.10:FF:000018">
    <property type="entry name" value="Cell division cycle protein 27 homolog B"/>
    <property type="match status" value="1"/>
</dbReference>
<dbReference type="FunFam" id="1.25.40.10:FF:000045">
    <property type="entry name" value="Cell division cycle protein 27 isoform X3"/>
    <property type="match status" value="1"/>
</dbReference>
<dbReference type="FunFam" id="1.25.40.10:FF:000051">
    <property type="entry name" value="Cell division cycle protein 27 isoform X3"/>
    <property type="match status" value="1"/>
</dbReference>
<dbReference type="Gene3D" id="1.25.40.10">
    <property type="entry name" value="Tetratricopeptide repeat domain"/>
    <property type="match status" value="4"/>
</dbReference>
<dbReference type="IDEAL" id="IID00447"/>
<dbReference type="InterPro" id="IPR011990">
    <property type="entry name" value="TPR-like_helical_dom_sf"/>
</dbReference>
<dbReference type="InterPro" id="IPR019734">
    <property type="entry name" value="TPR_rpt"/>
</dbReference>
<dbReference type="PANTHER" id="PTHR12558">
    <property type="entry name" value="CELL DIVISION CYCLE 16,23,27"/>
    <property type="match status" value="1"/>
</dbReference>
<dbReference type="PANTHER" id="PTHR12558:SF13">
    <property type="entry name" value="CELL DIVISION CYCLE PROTEIN 27 HOMOLOG"/>
    <property type="match status" value="1"/>
</dbReference>
<dbReference type="Pfam" id="PF12895">
    <property type="entry name" value="ANAPC3"/>
    <property type="match status" value="1"/>
</dbReference>
<dbReference type="Pfam" id="PF00515">
    <property type="entry name" value="TPR_1"/>
    <property type="match status" value="2"/>
</dbReference>
<dbReference type="Pfam" id="PF13181">
    <property type="entry name" value="TPR_8"/>
    <property type="match status" value="2"/>
</dbReference>
<dbReference type="SMART" id="SM00028">
    <property type="entry name" value="TPR"/>
    <property type="match status" value="8"/>
</dbReference>
<dbReference type="SUPFAM" id="SSF48452">
    <property type="entry name" value="TPR-like"/>
    <property type="match status" value="2"/>
</dbReference>
<dbReference type="PROSITE" id="PS50005">
    <property type="entry name" value="TPR"/>
    <property type="match status" value="8"/>
</dbReference>
<dbReference type="PROSITE" id="PS50293">
    <property type="entry name" value="TPR_REGION"/>
    <property type="match status" value="2"/>
</dbReference>
<name>CDC27_HUMAN</name>
<organism>
    <name type="scientific">Homo sapiens</name>
    <name type="common">Human</name>
    <dbReference type="NCBI Taxonomy" id="9606"/>
    <lineage>
        <taxon>Eukaryota</taxon>
        <taxon>Metazoa</taxon>
        <taxon>Chordata</taxon>
        <taxon>Craniata</taxon>
        <taxon>Vertebrata</taxon>
        <taxon>Euteleostomi</taxon>
        <taxon>Mammalia</taxon>
        <taxon>Eutheria</taxon>
        <taxon>Euarchontoglires</taxon>
        <taxon>Primates</taxon>
        <taxon>Haplorrhini</taxon>
        <taxon>Catarrhini</taxon>
        <taxon>Hominidae</taxon>
        <taxon>Homo</taxon>
    </lineage>
</organism>
<proteinExistence type="evidence at protein level"/>
<protein>
    <recommendedName>
        <fullName>Cell division cycle protein 27 homolog</fullName>
    </recommendedName>
    <alternativeName>
        <fullName>Anaphase-promoting complex subunit 3</fullName>
        <shortName>APC3</shortName>
    </alternativeName>
    <alternativeName>
        <fullName>CDC27 homolog</fullName>
        <shortName>CDC27Hs</shortName>
    </alternativeName>
    <alternativeName>
        <fullName>H-NUC</fullName>
    </alternativeName>
</protein>
<accession>P30260</accession>
<accession>G3V1C4</accession>
<accession>Q16349</accession>
<accession>Q96F35</accession>
<keyword id="KW-0002">3D-structure</keyword>
<keyword id="KW-0025">Alternative splicing</keyword>
<keyword id="KW-0963">Cytoplasm</keyword>
<keyword id="KW-0206">Cytoskeleton</keyword>
<keyword id="KW-0539">Nucleus</keyword>
<keyword id="KW-0597">Phosphoprotein</keyword>
<keyword id="KW-1267">Proteomics identification</keyword>
<keyword id="KW-1185">Reference proteome</keyword>
<keyword id="KW-0677">Repeat</keyword>
<keyword id="KW-0802">TPR repeat</keyword>
<keyword id="KW-0833">Ubl conjugation pathway</keyword>